<accession>Q17133</accession>
<sequence>MAEIEQSMIDEMKDGFPLFDNKGDGKIDGAQLGDVLRSFGLNPSNAEVEKIAKANEGKRLSFDDYLAIHKQVLGQGEVGSYEDFFEGLKLFDKEGTGLISGAELRHVLATLGEKLTEAQVDELMAGGGGQEDAEGNVNYDTFAKYLMLG</sequence>
<protein>
    <recommendedName>
        <fullName>Myosin, essential light chain</fullName>
    </recommendedName>
    <alternativeName>
        <fullName>Myosin light chain alkali</fullName>
    </alternativeName>
</protein>
<organism>
    <name type="scientific">Branchiostoma floridae</name>
    <name type="common">Florida lancelet</name>
    <name type="synonym">Amphioxus</name>
    <dbReference type="NCBI Taxonomy" id="7739"/>
    <lineage>
        <taxon>Eukaryota</taxon>
        <taxon>Metazoa</taxon>
        <taxon>Chordata</taxon>
        <taxon>Cephalochordata</taxon>
        <taxon>Leptocardii</taxon>
        <taxon>Amphioxiformes</taxon>
        <taxon>Branchiostomatidae</taxon>
        <taxon>Branchiostoma</taxon>
    </lineage>
</organism>
<keyword id="KW-0505">Motor protein</keyword>
<keyword id="KW-0518">Myosin</keyword>
<keyword id="KW-1185">Reference proteome</keyword>
<keyword id="KW-0677">Repeat</keyword>
<feature type="chain" id="PRO_0000198719" description="Myosin, essential light chain">
    <location>
        <begin position="1"/>
        <end position="149"/>
    </location>
</feature>
<feature type="domain" description="EF-hand 1" evidence="1">
    <location>
        <begin position="7"/>
        <end position="42"/>
    </location>
</feature>
<feature type="domain" description="EF-hand 2" evidence="1">
    <location>
        <begin position="79"/>
        <end position="114"/>
    </location>
</feature>
<comment type="subunit">
    <text>Myosin is a hexamer of 2 heavy chains and 4 light chains (two regulatory light chains and two essential light chains).</text>
</comment>
<proteinExistence type="evidence at transcript level"/>
<dbReference type="EMBL" id="U22529">
    <property type="protein sequence ID" value="AAA85502.1"/>
    <property type="molecule type" value="mRNA"/>
</dbReference>
<dbReference type="RefSeq" id="XP_002603233.1">
    <property type="nucleotide sequence ID" value="XM_002603187.1"/>
</dbReference>
<dbReference type="RefSeq" id="XP_035657561.1">
    <property type="nucleotide sequence ID" value="XM_035801668.1"/>
</dbReference>
<dbReference type="RefSeq" id="XP_035657562.1">
    <property type="nucleotide sequence ID" value="XM_035801669.1"/>
</dbReference>
<dbReference type="SMR" id="Q17133"/>
<dbReference type="GeneID" id="118403151"/>
<dbReference type="eggNOG" id="KOG0030">
    <property type="taxonomic scope" value="Eukaryota"/>
</dbReference>
<dbReference type="Proteomes" id="UP000001554">
    <property type="component" value="Chromosome 16"/>
</dbReference>
<dbReference type="GO" id="GO:0016460">
    <property type="term" value="C:myosin II complex"/>
    <property type="evidence" value="ECO:0000318"/>
    <property type="project" value="GO_Central"/>
</dbReference>
<dbReference type="GO" id="GO:0005509">
    <property type="term" value="F:calcium ion binding"/>
    <property type="evidence" value="ECO:0007669"/>
    <property type="project" value="InterPro"/>
</dbReference>
<dbReference type="FunFam" id="1.10.238.10:FF:000003">
    <property type="entry name" value="Calmodulin A"/>
    <property type="match status" value="1"/>
</dbReference>
<dbReference type="Gene3D" id="1.10.238.10">
    <property type="entry name" value="EF-hand"/>
    <property type="match status" value="2"/>
</dbReference>
<dbReference type="InterPro" id="IPR050230">
    <property type="entry name" value="CALM/Myosin/TropC-like"/>
</dbReference>
<dbReference type="InterPro" id="IPR011992">
    <property type="entry name" value="EF-hand-dom_pair"/>
</dbReference>
<dbReference type="InterPro" id="IPR002048">
    <property type="entry name" value="EF_hand_dom"/>
</dbReference>
<dbReference type="PANTHER" id="PTHR23048">
    <property type="entry name" value="MYOSIN LIGHT CHAIN 1, 3"/>
    <property type="match status" value="1"/>
</dbReference>
<dbReference type="PANTHER" id="PTHR23048:SF2">
    <property type="entry name" value="MYOSIN LIGHT CHAIN 3"/>
    <property type="match status" value="1"/>
</dbReference>
<dbReference type="SUPFAM" id="SSF47473">
    <property type="entry name" value="EF-hand"/>
    <property type="match status" value="1"/>
</dbReference>
<dbReference type="PROSITE" id="PS50222">
    <property type="entry name" value="EF_HAND_2"/>
    <property type="match status" value="2"/>
</dbReference>
<name>MLE_BRAFL</name>
<reference key="1">
    <citation type="journal article" date="1995" name="Dev. Biol.">
        <title>Sequence and expression of amphioxus alkali myosin light chain (AmphiMLC-alk) throughout development: implications for vertebrate myogenesis.</title>
        <authorList>
            <person name="Holland L.Z."/>
            <person name="Pace D.A."/>
            <person name="Blink M.L."/>
            <person name="Kene M."/>
            <person name="Holland N.D."/>
        </authorList>
    </citation>
    <scope>NUCLEOTIDE SEQUENCE [MRNA]</scope>
</reference>
<evidence type="ECO:0000255" key="1">
    <source>
        <dbReference type="PROSITE-ProRule" id="PRU00448"/>
    </source>
</evidence>